<dbReference type="EMBL" id="CP000435">
    <property type="protein sequence ID" value="ABI47722.1"/>
    <property type="molecule type" value="Genomic_DNA"/>
</dbReference>
<dbReference type="RefSeq" id="WP_011618490.1">
    <property type="nucleotide sequence ID" value="NC_008319.1"/>
</dbReference>
<dbReference type="SMR" id="Q0ICR4"/>
<dbReference type="STRING" id="64471.sync_0532"/>
<dbReference type="KEGG" id="syg:sync_0532"/>
<dbReference type="eggNOG" id="COG1327">
    <property type="taxonomic scope" value="Bacteria"/>
</dbReference>
<dbReference type="HOGENOM" id="CLU_108412_0_0_3"/>
<dbReference type="OrthoDB" id="9807461at2"/>
<dbReference type="Proteomes" id="UP000001961">
    <property type="component" value="Chromosome"/>
</dbReference>
<dbReference type="GO" id="GO:0005524">
    <property type="term" value="F:ATP binding"/>
    <property type="evidence" value="ECO:0007669"/>
    <property type="project" value="UniProtKB-KW"/>
</dbReference>
<dbReference type="GO" id="GO:0003677">
    <property type="term" value="F:DNA binding"/>
    <property type="evidence" value="ECO:0007669"/>
    <property type="project" value="UniProtKB-KW"/>
</dbReference>
<dbReference type="GO" id="GO:0008270">
    <property type="term" value="F:zinc ion binding"/>
    <property type="evidence" value="ECO:0007669"/>
    <property type="project" value="UniProtKB-UniRule"/>
</dbReference>
<dbReference type="GO" id="GO:0045892">
    <property type="term" value="P:negative regulation of DNA-templated transcription"/>
    <property type="evidence" value="ECO:0007669"/>
    <property type="project" value="UniProtKB-UniRule"/>
</dbReference>
<dbReference type="HAMAP" id="MF_00440">
    <property type="entry name" value="NrdR"/>
    <property type="match status" value="1"/>
</dbReference>
<dbReference type="InterPro" id="IPR005144">
    <property type="entry name" value="ATP-cone_dom"/>
</dbReference>
<dbReference type="InterPro" id="IPR055173">
    <property type="entry name" value="NrdR-like_N"/>
</dbReference>
<dbReference type="InterPro" id="IPR003796">
    <property type="entry name" value="RNR_NrdR-like"/>
</dbReference>
<dbReference type="NCBIfam" id="TIGR00244">
    <property type="entry name" value="transcriptional regulator NrdR"/>
    <property type="match status" value="1"/>
</dbReference>
<dbReference type="PANTHER" id="PTHR30455">
    <property type="entry name" value="TRANSCRIPTIONAL REPRESSOR NRDR"/>
    <property type="match status" value="1"/>
</dbReference>
<dbReference type="PANTHER" id="PTHR30455:SF2">
    <property type="entry name" value="TRANSCRIPTIONAL REPRESSOR NRDR"/>
    <property type="match status" value="1"/>
</dbReference>
<dbReference type="Pfam" id="PF03477">
    <property type="entry name" value="ATP-cone"/>
    <property type="match status" value="1"/>
</dbReference>
<dbReference type="Pfam" id="PF22811">
    <property type="entry name" value="Zn_ribbon_NrdR"/>
    <property type="match status" value="1"/>
</dbReference>
<dbReference type="PROSITE" id="PS51161">
    <property type="entry name" value="ATP_CONE"/>
    <property type="match status" value="1"/>
</dbReference>
<reference key="1">
    <citation type="journal article" date="2006" name="Proc. Natl. Acad. Sci. U.S.A.">
        <title>Genome sequence of Synechococcus CC9311: insights into adaptation to a coastal environment.</title>
        <authorList>
            <person name="Palenik B."/>
            <person name="Ren Q."/>
            <person name="Dupont C.L."/>
            <person name="Myers G.S."/>
            <person name="Heidelberg J.F."/>
            <person name="Badger J.H."/>
            <person name="Madupu R."/>
            <person name="Nelson W.C."/>
            <person name="Brinkac L.M."/>
            <person name="Dodson R.J."/>
            <person name="Durkin A.S."/>
            <person name="Daugherty S.C."/>
            <person name="Sullivan S.A."/>
            <person name="Khouri H."/>
            <person name="Mohamoud Y."/>
            <person name="Halpin R."/>
            <person name="Paulsen I.T."/>
        </authorList>
    </citation>
    <scope>NUCLEOTIDE SEQUENCE [LARGE SCALE GENOMIC DNA]</scope>
    <source>
        <strain>CC9311</strain>
    </source>
</reference>
<proteinExistence type="inferred from homology"/>
<gene>
    <name evidence="1" type="primary">nrdR</name>
    <name type="ordered locus">sync_0532</name>
</gene>
<evidence type="ECO:0000255" key="1">
    <source>
        <dbReference type="HAMAP-Rule" id="MF_00440"/>
    </source>
</evidence>
<name>NRDR_SYNS3</name>
<comment type="function">
    <text evidence="1">Negatively regulates transcription of bacterial ribonucleotide reductase nrd genes and operons by binding to NrdR-boxes.</text>
</comment>
<comment type="cofactor">
    <cofactor evidence="1">
        <name>Zn(2+)</name>
        <dbReference type="ChEBI" id="CHEBI:29105"/>
    </cofactor>
    <text evidence="1">Binds 1 zinc ion.</text>
</comment>
<comment type="similarity">
    <text evidence="1">Belongs to the NrdR family.</text>
</comment>
<protein>
    <recommendedName>
        <fullName evidence="1">Transcriptional repressor NrdR</fullName>
    </recommendedName>
</protein>
<sequence>MQCPSCQNTDSRVLESRAAEGGRSVRRRRECLNCEFRFTTYERVEMVPITVIKRNGHREIFNRSKLLHGLSRACEKTGLTPSKLEEIVDNLELSLQQSSSREITSSEIGELVLSHLKGLSEVAYVRFASVYRHFRSVSDFVSTLEGMNADKAELAALV</sequence>
<keyword id="KW-0067">ATP-binding</keyword>
<keyword id="KW-0238">DNA-binding</keyword>
<keyword id="KW-0479">Metal-binding</keyword>
<keyword id="KW-0547">Nucleotide-binding</keyword>
<keyword id="KW-1185">Reference proteome</keyword>
<keyword id="KW-0678">Repressor</keyword>
<keyword id="KW-0804">Transcription</keyword>
<keyword id="KW-0805">Transcription regulation</keyword>
<keyword id="KW-0862">Zinc</keyword>
<keyword id="KW-0863">Zinc-finger</keyword>
<organism>
    <name type="scientific">Synechococcus sp. (strain CC9311)</name>
    <dbReference type="NCBI Taxonomy" id="64471"/>
    <lineage>
        <taxon>Bacteria</taxon>
        <taxon>Bacillati</taxon>
        <taxon>Cyanobacteriota</taxon>
        <taxon>Cyanophyceae</taxon>
        <taxon>Synechococcales</taxon>
        <taxon>Synechococcaceae</taxon>
        <taxon>Synechococcus</taxon>
    </lineage>
</organism>
<accession>Q0ICR4</accession>
<feature type="chain" id="PRO_0000264221" description="Transcriptional repressor NrdR">
    <location>
        <begin position="1"/>
        <end position="158"/>
    </location>
</feature>
<feature type="domain" description="ATP-cone" evidence="1">
    <location>
        <begin position="49"/>
        <end position="139"/>
    </location>
</feature>
<feature type="zinc finger region" evidence="1">
    <location>
        <begin position="3"/>
        <end position="34"/>
    </location>
</feature>